<feature type="chain" id="PRO_0000267163" description="UPF0398 protein YfdB">
    <location>
        <begin position="1"/>
        <end position="174"/>
    </location>
</feature>
<gene>
    <name type="primary">yfdB</name>
    <name type="ordered locus">LL0545</name>
    <name type="ORF">L131937</name>
</gene>
<proteinExistence type="inferred from homology"/>
<accession>Q9CI21</accession>
<comment type="similarity">
    <text evidence="1">Belongs to the UPF0398 family.</text>
</comment>
<reference key="1">
    <citation type="journal article" date="2001" name="Genome Res.">
        <title>The complete genome sequence of the lactic acid bacterium Lactococcus lactis ssp. lactis IL1403.</title>
        <authorList>
            <person name="Bolotin A."/>
            <person name="Wincker P."/>
            <person name="Mauger S."/>
            <person name="Jaillon O."/>
            <person name="Malarme K."/>
            <person name="Weissenbach J."/>
            <person name="Ehrlich S.D."/>
            <person name="Sorokin A."/>
        </authorList>
    </citation>
    <scope>NUCLEOTIDE SEQUENCE [LARGE SCALE GENOMIC DNA]</scope>
    <source>
        <strain>IL1403</strain>
    </source>
</reference>
<organism>
    <name type="scientific">Lactococcus lactis subsp. lactis (strain IL1403)</name>
    <name type="common">Streptococcus lactis</name>
    <dbReference type="NCBI Taxonomy" id="272623"/>
    <lineage>
        <taxon>Bacteria</taxon>
        <taxon>Bacillati</taxon>
        <taxon>Bacillota</taxon>
        <taxon>Bacilli</taxon>
        <taxon>Lactobacillales</taxon>
        <taxon>Streptococcaceae</taxon>
        <taxon>Lactococcus</taxon>
    </lineage>
</organism>
<sequence>MNSLLIMGYTSFDLGIFNEKDIKVSIIKKTIRRKLINFLEEGLRWIIFTGNLGFEYWALEVAKELQTDYDFQIGTIFSFETHGQNWNESNQVKLAAFKQVDFVKYAFETYESPSQFRQYNDFILENTEGAFVFYDEENETKLKYMVEKMKQNTNYEVYLLDFEDLQETFEEMNE</sequence>
<dbReference type="EMBL" id="AE005176">
    <property type="protein sequence ID" value="AAK04643.1"/>
    <property type="molecule type" value="Genomic_DNA"/>
</dbReference>
<dbReference type="PIR" id="A86693">
    <property type="entry name" value="A86693"/>
</dbReference>
<dbReference type="RefSeq" id="NP_266701.1">
    <property type="nucleotide sequence ID" value="NC_002662.1"/>
</dbReference>
<dbReference type="RefSeq" id="WP_010905434.1">
    <property type="nucleotide sequence ID" value="NC_002662.1"/>
</dbReference>
<dbReference type="SMR" id="Q9CI21"/>
<dbReference type="PaxDb" id="272623-L131937"/>
<dbReference type="EnsemblBacteria" id="AAK04643">
    <property type="protein sequence ID" value="AAK04643"/>
    <property type="gene ID" value="L131937"/>
</dbReference>
<dbReference type="KEGG" id="lla:L131937"/>
<dbReference type="PATRIC" id="fig|272623.7.peg.583"/>
<dbReference type="eggNOG" id="COG4474">
    <property type="taxonomic scope" value="Bacteria"/>
</dbReference>
<dbReference type="HOGENOM" id="CLU_105319_0_0_9"/>
<dbReference type="OrthoDB" id="2301957at2"/>
<dbReference type="Proteomes" id="UP000002196">
    <property type="component" value="Chromosome"/>
</dbReference>
<dbReference type="Gene3D" id="3.40.50.450">
    <property type="match status" value="1"/>
</dbReference>
<dbReference type="HAMAP" id="MF_01575">
    <property type="entry name" value="UPF0398"/>
    <property type="match status" value="1"/>
</dbReference>
<dbReference type="InterPro" id="IPR010697">
    <property type="entry name" value="YspA"/>
</dbReference>
<dbReference type="NCBIfam" id="NF010181">
    <property type="entry name" value="PRK13660.1"/>
    <property type="match status" value="1"/>
</dbReference>
<dbReference type="PANTHER" id="PTHR38440:SF1">
    <property type="entry name" value="UPF0398 PROTEIN SPR0331"/>
    <property type="match status" value="1"/>
</dbReference>
<dbReference type="PANTHER" id="PTHR38440">
    <property type="entry name" value="UPF0398 PROTEIN YPSA"/>
    <property type="match status" value="1"/>
</dbReference>
<dbReference type="Pfam" id="PF06908">
    <property type="entry name" value="YpsA"/>
    <property type="match status" value="1"/>
</dbReference>
<dbReference type="PIRSF" id="PIRSF021290">
    <property type="entry name" value="DUF1273"/>
    <property type="match status" value="1"/>
</dbReference>
<dbReference type="SUPFAM" id="SSF102405">
    <property type="entry name" value="MCP/YpsA-like"/>
    <property type="match status" value="1"/>
</dbReference>
<protein>
    <recommendedName>
        <fullName evidence="1">UPF0398 protein YfdB</fullName>
    </recommendedName>
</protein>
<name>YFDB_LACLA</name>
<keyword id="KW-1185">Reference proteome</keyword>
<evidence type="ECO:0000255" key="1">
    <source>
        <dbReference type="HAMAP-Rule" id="MF_01575"/>
    </source>
</evidence>